<gene>
    <name evidence="1" type="primary">argC</name>
    <name type="ordered locus">BRADO6484</name>
</gene>
<keyword id="KW-0028">Amino-acid biosynthesis</keyword>
<keyword id="KW-0055">Arginine biosynthesis</keyword>
<keyword id="KW-0963">Cytoplasm</keyword>
<keyword id="KW-0521">NADP</keyword>
<keyword id="KW-0560">Oxidoreductase</keyword>
<keyword id="KW-1185">Reference proteome</keyword>
<protein>
    <recommendedName>
        <fullName evidence="1">N-acetyl-gamma-glutamyl-phosphate reductase</fullName>
        <shortName evidence="1">AGPR</shortName>
        <ecNumber evidence="1">1.2.1.38</ecNumber>
    </recommendedName>
    <alternativeName>
        <fullName evidence="1">N-acetyl-glutamate semialdehyde dehydrogenase</fullName>
        <shortName evidence="1">NAGSA dehydrogenase</shortName>
    </alternativeName>
</protein>
<organism>
    <name type="scientific">Bradyrhizobium sp. (strain ORS 278)</name>
    <dbReference type="NCBI Taxonomy" id="114615"/>
    <lineage>
        <taxon>Bacteria</taxon>
        <taxon>Pseudomonadati</taxon>
        <taxon>Pseudomonadota</taxon>
        <taxon>Alphaproteobacteria</taxon>
        <taxon>Hyphomicrobiales</taxon>
        <taxon>Nitrobacteraceae</taxon>
        <taxon>Bradyrhizobium</taxon>
    </lineage>
</organism>
<name>ARGC_BRASO</name>
<feature type="chain" id="PRO_1000010982" description="N-acetyl-gamma-glutamyl-phosphate reductase">
    <location>
        <begin position="1"/>
        <end position="324"/>
    </location>
</feature>
<feature type="active site" evidence="1">
    <location>
        <position position="131"/>
    </location>
</feature>
<accession>A4Z1S1</accession>
<reference key="1">
    <citation type="journal article" date="2007" name="Science">
        <title>Legumes symbioses: absence of nod genes in photosynthetic bradyrhizobia.</title>
        <authorList>
            <person name="Giraud E."/>
            <person name="Moulin L."/>
            <person name="Vallenet D."/>
            <person name="Barbe V."/>
            <person name="Cytryn E."/>
            <person name="Avarre J.-C."/>
            <person name="Jaubert M."/>
            <person name="Simon D."/>
            <person name="Cartieaux F."/>
            <person name="Prin Y."/>
            <person name="Bena G."/>
            <person name="Hannibal L."/>
            <person name="Fardoux J."/>
            <person name="Kojadinovic M."/>
            <person name="Vuillet L."/>
            <person name="Lajus A."/>
            <person name="Cruveiller S."/>
            <person name="Rouy Z."/>
            <person name="Mangenot S."/>
            <person name="Segurens B."/>
            <person name="Dossat C."/>
            <person name="Franck W.L."/>
            <person name="Chang W.-S."/>
            <person name="Saunders E."/>
            <person name="Bruce D."/>
            <person name="Richardson P."/>
            <person name="Normand P."/>
            <person name="Dreyfus B."/>
            <person name="Pignol D."/>
            <person name="Stacey G."/>
            <person name="Emerich D."/>
            <person name="Vermeglio A."/>
            <person name="Medigue C."/>
            <person name="Sadowsky M."/>
        </authorList>
    </citation>
    <scope>NUCLEOTIDE SEQUENCE [LARGE SCALE GENOMIC DNA]</scope>
    <source>
        <strain>ORS 278</strain>
    </source>
</reference>
<proteinExistence type="inferred from homology"/>
<sequence length="324" mass="33704">MSIRVGIVGISGFGGGEAMRLIAGHPAFEPVYAAGEGSAGQRLSERFPGVPAKLADLVIEKWDPSRLPQLDVLFASLPTGASRDALARIPREVKIVDIGGDHRYADGWTYGLADVWPEAIAGKTRIANPGCFPAAALTALAPLLADRLIAPENIVIDAKTGISGAGRGGGAGFGYAESNENLIPYGLLKHVHMPEIESTIARISGGSAAGLVFTPHLVPMTRGILATIYARGRATSDQCLDAARSFYAGRAFVRVTDKPPQTKWATGSNLAFVSYAADPDRNLVIALGVVDNLGKGAAGQAVQNANLMCGLPETAGLEGAPVWP</sequence>
<dbReference type="EC" id="1.2.1.38" evidence="1"/>
<dbReference type="EMBL" id="CU234118">
    <property type="protein sequence ID" value="CAL80097.1"/>
    <property type="molecule type" value="Genomic_DNA"/>
</dbReference>
<dbReference type="RefSeq" id="WP_012029976.1">
    <property type="nucleotide sequence ID" value="NC_009445.1"/>
</dbReference>
<dbReference type="SMR" id="A4Z1S1"/>
<dbReference type="STRING" id="114615.BRADO6484"/>
<dbReference type="KEGG" id="bra:BRADO6484"/>
<dbReference type="eggNOG" id="COG0002">
    <property type="taxonomic scope" value="Bacteria"/>
</dbReference>
<dbReference type="HOGENOM" id="CLU_006384_0_1_5"/>
<dbReference type="OrthoDB" id="9801289at2"/>
<dbReference type="UniPathway" id="UPA00068">
    <property type="reaction ID" value="UER00108"/>
</dbReference>
<dbReference type="Proteomes" id="UP000001994">
    <property type="component" value="Chromosome"/>
</dbReference>
<dbReference type="GO" id="GO:0005737">
    <property type="term" value="C:cytoplasm"/>
    <property type="evidence" value="ECO:0007669"/>
    <property type="project" value="UniProtKB-SubCell"/>
</dbReference>
<dbReference type="GO" id="GO:0003942">
    <property type="term" value="F:N-acetyl-gamma-glutamyl-phosphate reductase activity"/>
    <property type="evidence" value="ECO:0007669"/>
    <property type="project" value="UniProtKB-UniRule"/>
</dbReference>
<dbReference type="GO" id="GO:0051287">
    <property type="term" value="F:NAD binding"/>
    <property type="evidence" value="ECO:0007669"/>
    <property type="project" value="InterPro"/>
</dbReference>
<dbReference type="GO" id="GO:0070401">
    <property type="term" value="F:NADP+ binding"/>
    <property type="evidence" value="ECO:0007669"/>
    <property type="project" value="InterPro"/>
</dbReference>
<dbReference type="GO" id="GO:0006526">
    <property type="term" value="P:L-arginine biosynthetic process"/>
    <property type="evidence" value="ECO:0007669"/>
    <property type="project" value="UniProtKB-UniRule"/>
</dbReference>
<dbReference type="CDD" id="cd24148">
    <property type="entry name" value="AGPR_1_actinobacAGPR_like"/>
    <property type="match status" value="1"/>
</dbReference>
<dbReference type="Gene3D" id="3.30.360.10">
    <property type="entry name" value="Dihydrodipicolinate Reductase, domain 2"/>
    <property type="match status" value="1"/>
</dbReference>
<dbReference type="Gene3D" id="3.40.50.720">
    <property type="entry name" value="NAD(P)-binding Rossmann-like Domain"/>
    <property type="match status" value="1"/>
</dbReference>
<dbReference type="HAMAP" id="MF_00150">
    <property type="entry name" value="ArgC_type1"/>
    <property type="match status" value="1"/>
</dbReference>
<dbReference type="InterPro" id="IPR000706">
    <property type="entry name" value="AGPR_type-1"/>
</dbReference>
<dbReference type="InterPro" id="IPR036291">
    <property type="entry name" value="NAD(P)-bd_dom_sf"/>
</dbReference>
<dbReference type="InterPro" id="IPR050085">
    <property type="entry name" value="NAGSA_dehydrogenase"/>
</dbReference>
<dbReference type="InterPro" id="IPR000534">
    <property type="entry name" value="Semialdehyde_DH_NAD-bd"/>
</dbReference>
<dbReference type="NCBIfam" id="TIGR01850">
    <property type="entry name" value="argC"/>
    <property type="match status" value="1"/>
</dbReference>
<dbReference type="PANTHER" id="PTHR32338:SF10">
    <property type="entry name" value="N-ACETYL-GAMMA-GLUTAMYL-PHOSPHATE REDUCTASE, CHLOROPLASTIC-RELATED"/>
    <property type="match status" value="1"/>
</dbReference>
<dbReference type="PANTHER" id="PTHR32338">
    <property type="entry name" value="N-ACETYL-GAMMA-GLUTAMYL-PHOSPHATE REDUCTASE, CHLOROPLASTIC-RELATED-RELATED"/>
    <property type="match status" value="1"/>
</dbReference>
<dbReference type="Pfam" id="PF01118">
    <property type="entry name" value="Semialdhyde_dh"/>
    <property type="match status" value="1"/>
</dbReference>
<dbReference type="Pfam" id="PF22698">
    <property type="entry name" value="Semialdhyde_dhC_1"/>
    <property type="match status" value="1"/>
</dbReference>
<dbReference type="SMART" id="SM00859">
    <property type="entry name" value="Semialdhyde_dh"/>
    <property type="match status" value="1"/>
</dbReference>
<dbReference type="SUPFAM" id="SSF55347">
    <property type="entry name" value="Glyceraldehyde-3-phosphate dehydrogenase-like, C-terminal domain"/>
    <property type="match status" value="1"/>
</dbReference>
<dbReference type="SUPFAM" id="SSF51735">
    <property type="entry name" value="NAD(P)-binding Rossmann-fold domains"/>
    <property type="match status" value="1"/>
</dbReference>
<evidence type="ECO:0000255" key="1">
    <source>
        <dbReference type="HAMAP-Rule" id="MF_00150"/>
    </source>
</evidence>
<comment type="function">
    <text evidence="1">Catalyzes the NADPH-dependent reduction of N-acetyl-5-glutamyl phosphate to yield N-acetyl-L-glutamate 5-semialdehyde.</text>
</comment>
<comment type="catalytic activity">
    <reaction evidence="1">
        <text>N-acetyl-L-glutamate 5-semialdehyde + phosphate + NADP(+) = N-acetyl-L-glutamyl 5-phosphate + NADPH + H(+)</text>
        <dbReference type="Rhea" id="RHEA:21588"/>
        <dbReference type="ChEBI" id="CHEBI:15378"/>
        <dbReference type="ChEBI" id="CHEBI:29123"/>
        <dbReference type="ChEBI" id="CHEBI:43474"/>
        <dbReference type="ChEBI" id="CHEBI:57783"/>
        <dbReference type="ChEBI" id="CHEBI:57936"/>
        <dbReference type="ChEBI" id="CHEBI:58349"/>
        <dbReference type="EC" id="1.2.1.38"/>
    </reaction>
</comment>
<comment type="pathway">
    <text evidence="1">Amino-acid biosynthesis; L-arginine biosynthesis; N(2)-acetyl-L-ornithine from L-glutamate: step 3/4.</text>
</comment>
<comment type="subcellular location">
    <subcellularLocation>
        <location evidence="1">Cytoplasm</location>
    </subcellularLocation>
</comment>
<comment type="similarity">
    <text evidence="1">Belongs to the NAGSA dehydrogenase family. Type 1 subfamily.</text>
</comment>